<gene>
    <name evidence="1" type="primary">uppP</name>
    <name type="synonym">bacA</name>
    <name type="synonym">upk</name>
    <name type="ordered locus">aq_2195</name>
</gene>
<dbReference type="EC" id="3.6.1.27" evidence="1"/>
<dbReference type="EMBL" id="AE000657">
    <property type="protein sequence ID" value="AAC07896.1"/>
    <property type="molecule type" value="Genomic_DNA"/>
</dbReference>
<dbReference type="PIR" id="G70488">
    <property type="entry name" value="G70488"/>
</dbReference>
<dbReference type="RefSeq" id="NP_214508.1">
    <property type="nucleotide sequence ID" value="NC_000918.1"/>
</dbReference>
<dbReference type="RefSeq" id="WP_010881444.1">
    <property type="nucleotide sequence ID" value="NC_000918.1"/>
</dbReference>
<dbReference type="SMR" id="O67939"/>
<dbReference type="FunCoup" id="O67939">
    <property type="interactions" value="257"/>
</dbReference>
<dbReference type="STRING" id="224324.aq_2195"/>
<dbReference type="EnsemblBacteria" id="AAC07896">
    <property type="protein sequence ID" value="AAC07896"/>
    <property type="gene ID" value="aq_2195"/>
</dbReference>
<dbReference type="KEGG" id="aae:aq_2195"/>
<dbReference type="PATRIC" id="fig|224324.8.peg.1699"/>
<dbReference type="eggNOG" id="COG1968">
    <property type="taxonomic scope" value="Bacteria"/>
</dbReference>
<dbReference type="HOGENOM" id="CLU_060296_2_0_0"/>
<dbReference type="InParanoid" id="O67939"/>
<dbReference type="OrthoDB" id="9808289at2"/>
<dbReference type="Proteomes" id="UP000000798">
    <property type="component" value="Chromosome"/>
</dbReference>
<dbReference type="GO" id="GO:0005886">
    <property type="term" value="C:plasma membrane"/>
    <property type="evidence" value="ECO:0000318"/>
    <property type="project" value="GO_Central"/>
</dbReference>
<dbReference type="GO" id="GO:0050380">
    <property type="term" value="F:undecaprenyl-diphosphatase activity"/>
    <property type="evidence" value="ECO:0000318"/>
    <property type="project" value="GO_Central"/>
</dbReference>
<dbReference type="GO" id="GO:0071555">
    <property type="term" value="P:cell wall organization"/>
    <property type="evidence" value="ECO:0007669"/>
    <property type="project" value="UniProtKB-KW"/>
</dbReference>
<dbReference type="GO" id="GO:0009252">
    <property type="term" value="P:peptidoglycan biosynthetic process"/>
    <property type="evidence" value="ECO:0007669"/>
    <property type="project" value="UniProtKB-KW"/>
</dbReference>
<dbReference type="GO" id="GO:0000270">
    <property type="term" value="P:peptidoglycan metabolic process"/>
    <property type="evidence" value="ECO:0000318"/>
    <property type="project" value="GO_Central"/>
</dbReference>
<dbReference type="GO" id="GO:0008360">
    <property type="term" value="P:regulation of cell shape"/>
    <property type="evidence" value="ECO:0007669"/>
    <property type="project" value="UniProtKB-KW"/>
</dbReference>
<dbReference type="GO" id="GO:0046677">
    <property type="term" value="P:response to antibiotic"/>
    <property type="evidence" value="ECO:0007669"/>
    <property type="project" value="UniProtKB-UniRule"/>
</dbReference>
<dbReference type="HAMAP" id="MF_01006">
    <property type="entry name" value="Undec_diphosphatase"/>
    <property type="match status" value="1"/>
</dbReference>
<dbReference type="InterPro" id="IPR003824">
    <property type="entry name" value="UppP"/>
</dbReference>
<dbReference type="NCBIfam" id="NF001389">
    <property type="entry name" value="PRK00281.1-2"/>
    <property type="match status" value="1"/>
</dbReference>
<dbReference type="NCBIfam" id="NF001390">
    <property type="entry name" value="PRK00281.1-4"/>
    <property type="match status" value="1"/>
</dbReference>
<dbReference type="NCBIfam" id="TIGR00753">
    <property type="entry name" value="undec_PP_bacA"/>
    <property type="match status" value="1"/>
</dbReference>
<dbReference type="PANTHER" id="PTHR30622">
    <property type="entry name" value="UNDECAPRENYL-DIPHOSPHATASE"/>
    <property type="match status" value="1"/>
</dbReference>
<dbReference type="PANTHER" id="PTHR30622:SF3">
    <property type="entry name" value="UNDECAPRENYL-DIPHOSPHATASE"/>
    <property type="match status" value="1"/>
</dbReference>
<dbReference type="Pfam" id="PF02673">
    <property type="entry name" value="BacA"/>
    <property type="match status" value="1"/>
</dbReference>
<keyword id="KW-0046">Antibiotic resistance</keyword>
<keyword id="KW-0997">Cell inner membrane</keyword>
<keyword id="KW-1003">Cell membrane</keyword>
<keyword id="KW-0133">Cell shape</keyword>
<keyword id="KW-0961">Cell wall biogenesis/degradation</keyword>
<keyword id="KW-0378">Hydrolase</keyword>
<keyword id="KW-0472">Membrane</keyword>
<keyword id="KW-0573">Peptidoglycan synthesis</keyword>
<keyword id="KW-1185">Reference proteome</keyword>
<keyword id="KW-0812">Transmembrane</keyword>
<keyword id="KW-1133">Transmembrane helix</keyword>
<name>UPPP_AQUAE</name>
<feature type="chain" id="PRO_0000151082" description="Undecaprenyl-diphosphatase">
    <location>
        <begin position="1"/>
        <end position="256"/>
    </location>
</feature>
<feature type="transmembrane region" description="Helical" evidence="1">
    <location>
        <begin position="8"/>
        <end position="28"/>
    </location>
</feature>
<feature type="transmembrane region" description="Helical" evidence="1">
    <location>
        <begin position="41"/>
        <end position="61"/>
    </location>
</feature>
<feature type="transmembrane region" description="Helical" evidence="1">
    <location>
        <begin position="75"/>
        <end position="95"/>
    </location>
</feature>
<feature type="transmembrane region" description="Helical" evidence="1">
    <location>
        <begin position="96"/>
        <end position="116"/>
    </location>
</feature>
<feature type="transmembrane region" description="Helical" evidence="1">
    <location>
        <begin position="175"/>
        <end position="195"/>
    </location>
</feature>
<feature type="transmembrane region" description="Helical" evidence="1">
    <location>
        <begin position="208"/>
        <end position="228"/>
    </location>
</feature>
<feature type="transmembrane region" description="Helical" evidence="1">
    <location>
        <begin position="236"/>
        <end position="256"/>
    </location>
</feature>
<comment type="function">
    <text evidence="1">Catalyzes the dephosphorylation of undecaprenyl diphosphate (UPP). Confers resistance to bacitracin.</text>
</comment>
<comment type="catalytic activity">
    <reaction evidence="1">
        <text>di-trans,octa-cis-undecaprenyl diphosphate + H2O = di-trans,octa-cis-undecaprenyl phosphate + phosphate + H(+)</text>
        <dbReference type="Rhea" id="RHEA:28094"/>
        <dbReference type="ChEBI" id="CHEBI:15377"/>
        <dbReference type="ChEBI" id="CHEBI:15378"/>
        <dbReference type="ChEBI" id="CHEBI:43474"/>
        <dbReference type="ChEBI" id="CHEBI:58405"/>
        <dbReference type="ChEBI" id="CHEBI:60392"/>
        <dbReference type="EC" id="3.6.1.27"/>
    </reaction>
</comment>
<comment type="subcellular location">
    <subcellularLocation>
        <location evidence="1">Cell inner membrane</location>
        <topology evidence="1">Multi-pass membrane protein</topology>
    </subcellularLocation>
</comment>
<comment type="miscellaneous">
    <text>Bacitracin is thought to be involved in the inhibition of peptidoglycan synthesis by sequestering undecaprenyl diphosphate, thereby reducing the pool of lipid carrier available.</text>
</comment>
<comment type="similarity">
    <text evidence="1">Belongs to the UppP family.</text>
</comment>
<protein>
    <recommendedName>
        <fullName evidence="1">Undecaprenyl-diphosphatase</fullName>
        <ecNumber evidence="1">3.6.1.27</ecNumber>
    </recommendedName>
    <alternativeName>
        <fullName evidence="1">Bacitracin resistance protein</fullName>
    </alternativeName>
    <alternativeName>
        <fullName evidence="1">Undecaprenyl pyrophosphate phosphatase</fullName>
    </alternativeName>
</protein>
<accession>O67939</accession>
<evidence type="ECO:0000255" key="1">
    <source>
        <dbReference type="HAMAP-Rule" id="MF_01006"/>
    </source>
</evidence>
<proteinExistence type="inferred from homology"/>
<organism>
    <name type="scientific">Aquifex aeolicus (strain VF5)</name>
    <dbReference type="NCBI Taxonomy" id="224324"/>
    <lineage>
        <taxon>Bacteria</taxon>
        <taxon>Pseudomonadati</taxon>
        <taxon>Aquificota</taxon>
        <taxon>Aquificia</taxon>
        <taxon>Aquificales</taxon>
        <taxon>Aquificaceae</taxon>
        <taxon>Aquifex</taxon>
    </lineage>
</organism>
<sequence length="256" mass="28466">MTEWQAVVLGIVEGISEFLPISSTGHLILTAHILGIKHTDFVKSFEISIQLGSILAVVVLYFNRLIRDYEIWKRIIAAFIPTGIIGFLLYKLIKGFLIGNDLVVVVSLILGGIILIFADTYCEKFCYLGDVRELPLRKAFMIGVFQSIAVIPGVSRSGSTIIGGMLMGLNRKVAAEFSFLLAIPTMFAATTYDLIKSGGSFNAQEWNILIIGFITSFITALIVVKWFLNFLKSHSLKIFGFYRILIGLVYAAFFLF</sequence>
<reference key="1">
    <citation type="journal article" date="1998" name="Nature">
        <title>The complete genome of the hyperthermophilic bacterium Aquifex aeolicus.</title>
        <authorList>
            <person name="Deckert G."/>
            <person name="Warren P.V."/>
            <person name="Gaasterland T."/>
            <person name="Young W.G."/>
            <person name="Lenox A.L."/>
            <person name="Graham D.E."/>
            <person name="Overbeek R."/>
            <person name="Snead M.A."/>
            <person name="Keller M."/>
            <person name="Aujay M."/>
            <person name="Huber R."/>
            <person name="Feldman R.A."/>
            <person name="Short J.M."/>
            <person name="Olsen G.J."/>
            <person name="Swanson R.V."/>
        </authorList>
    </citation>
    <scope>NUCLEOTIDE SEQUENCE [LARGE SCALE GENOMIC DNA]</scope>
    <source>
        <strain>VF5</strain>
    </source>
</reference>